<dbReference type="EC" id="3.6.1.-" evidence="1"/>
<dbReference type="EMBL" id="AL596168">
    <property type="protein sequence ID" value="CAC96600.1"/>
    <property type="molecule type" value="Genomic_DNA"/>
</dbReference>
<dbReference type="PIR" id="AH1603">
    <property type="entry name" value="AH1603"/>
</dbReference>
<dbReference type="RefSeq" id="WP_010991500.1">
    <property type="nucleotide sequence ID" value="NC_003212.1"/>
</dbReference>
<dbReference type="SMR" id="Q92C22"/>
<dbReference type="STRING" id="272626.gene:17565700"/>
<dbReference type="GeneID" id="93234749"/>
<dbReference type="KEGG" id="lin:lin1369"/>
<dbReference type="eggNOG" id="COG1162">
    <property type="taxonomic scope" value="Bacteria"/>
</dbReference>
<dbReference type="HOGENOM" id="CLU_033617_0_1_9"/>
<dbReference type="OrthoDB" id="9809485at2"/>
<dbReference type="Proteomes" id="UP000002513">
    <property type="component" value="Chromosome"/>
</dbReference>
<dbReference type="GO" id="GO:0005737">
    <property type="term" value="C:cytoplasm"/>
    <property type="evidence" value="ECO:0007669"/>
    <property type="project" value="UniProtKB-SubCell"/>
</dbReference>
<dbReference type="GO" id="GO:0005525">
    <property type="term" value="F:GTP binding"/>
    <property type="evidence" value="ECO:0007669"/>
    <property type="project" value="UniProtKB-UniRule"/>
</dbReference>
<dbReference type="GO" id="GO:0003924">
    <property type="term" value="F:GTPase activity"/>
    <property type="evidence" value="ECO:0007669"/>
    <property type="project" value="UniProtKB-UniRule"/>
</dbReference>
<dbReference type="GO" id="GO:0046872">
    <property type="term" value="F:metal ion binding"/>
    <property type="evidence" value="ECO:0007669"/>
    <property type="project" value="UniProtKB-KW"/>
</dbReference>
<dbReference type="GO" id="GO:0019843">
    <property type="term" value="F:rRNA binding"/>
    <property type="evidence" value="ECO:0007669"/>
    <property type="project" value="UniProtKB-KW"/>
</dbReference>
<dbReference type="GO" id="GO:0042274">
    <property type="term" value="P:ribosomal small subunit biogenesis"/>
    <property type="evidence" value="ECO:0007669"/>
    <property type="project" value="UniProtKB-UniRule"/>
</dbReference>
<dbReference type="CDD" id="cd01854">
    <property type="entry name" value="YjeQ_EngC"/>
    <property type="match status" value="1"/>
</dbReference>
<dbReference type="Gene3D" id="3.40.50.300">
    <property type="entry name" value="P-loop containing nucleotide triphosphate hydrolases"/>
    <property type="match status" value="1"/>
</dbReference>
<dbReference type="Gene3D" id="1.10.40.50">
    <property type="entry name" value="Probable gtpase engc, domain 3"/>
    <property type="match status" value="1"/>
</dbReference>
<dbReference type="HAMAP" id="MF_01820">
    <property type="entry name" value="GTPase_RsgA"/>
    <property type="match status" value="1"/>
</dbReference>
<dbReference type="InterPro" id="IPR030378">
    <property type="entry name" value="G_CP_dom"/>
</dbReference>
<dbReference type="InterPro" id="IPR027417">
    <property type="entry name" value="P-loop_NTPase"/>
</dbReference>
<dbReference type="InterPro" id="IPR004881">
    <property type="entry name" value="Ribosome_biogen_GTPase_RsgA"/>
</dbReference>
<dbReference type="InterPro" id="IPR010914">
    <property type="entry name" value="RsgA_GTPase_dom"/>
</dbReference>
<dbReference type="NCBIfam" id="TIGR00157">
    <property type="entry name" value="ribosome small subunit-dependent GTPase A"/>
    <property type="match status" value="1"/>
</dbReference>
<dbReference type="PANTHER" id="PTHR32120">
    <property type="entry name" value="SMALL RIBOSOMAL SUBUNIT BIOGENESIS GTPASE RSGA"/>
    <property type="match status" value="1"/>
</dbReference>
<dbReference type="PANTHER" id="PTHR32120:SF10">
    <property type="entry name" value="SMALL RIBOSOMAL SUBUNIT BIOGENESIS GTPASE RSGA"/>
    <property type="match status" value="1"/>
</dbReference>
<dbReference type="Pfam" id="PF03193">
    <property type="entry name" value="RsgA_GTPase"/>
    <property type="match status" value="1"/>
</dbReference>
<dbReference type="SUPFAM" id="SSF52540">
    <property type="entry name" value="P-loop containing nucleoside triphosphate hydrolases"/>
    <property type="match status" value="1"/>
</dbReference>
<dbReference type="PROSITE" id="PS50936">
    <property type="entry name" value="ENGC_GTPASE"/>
    <property type="match status" value="1"/>
</dbReference>
<dbReference type="PROSITE" id="PS51721">
    <property type="entry name" value="G_CP"/>
    <property type="match status" value="1"/>
</dbReference>
<sequence>MILEKYGFTSFFEEQKIAATSSYGRVTAVFRDFYRVITENGEFLATLKRGNFYELSPSNLPAVGDFVEVSNEKQILSVLQRKTIFSRMTKDSEEQLIAANFDYALIVMSLNHDFNLNRLERYLTVAWDSGATPIIILTKADLVDDLTPFTMELETVAYGVPTYYVDNLSHRGFEALEADLKPNSTLVLLGSSGVGKSSFINSLAGADLMKTSEIREDDSKGKHTTTHREMHLLANGWIIIDTPGMREFGIGLNQAGLETTFSDVEELSKDCRFHDCSHTSEPGCAVQESLADGTLSLKHYENWQKLQREMAYHARKNSPALARQERDRWKTIQKSLRTHLKTRPKR</sequence>
<comment type="function">
    <text evidence="1">One of several proteins that assist in the late maturation steps of the functional core of the 30S ribosomal subunit. Helps release RbfA from mature subunits. May play a role in the assembly of ribosomal proteins into the subunit. Circularly permuted GTPase that catalyzes slow GTP hydrolysis, GTPase activity is stimulated by the 30S ribosomal subunit.</text>
</comment>
<comment type="cofactor">
    <cofactor evidence="1">
        <name>Zn(2+)</name>
        <dbReference type="ChEBI" id="CHEBI:29105"/>
    </cofactor>
    <text evidence="1">Binds 1 zinc ion per subunit.</text>
</comment>
<comment type="subunit">
    <text evidence="1">Monomer. Associates with 30S ribosomal subunit, binds 16S rRNA.</text>
</comment>
<comment type="subcellular location">
    <subcellularLocation>
        <location evidence="1">Cytoplasm</location>
    </subcellularLocation>
</comment>
<comment type="similarity">
    <text evidence="1">Belongs to the TRAFAC class YlqF/YawG GTPase family. RsgA subfamily.</text>
</comment>
<protein>
    <recommendedName>
        <fullName evidence="1">Small ribosomal subunit biogenesis GTPase RsgA 1</fullName>
        <ecNumber evidence="1">3.6.1.-</ecNumber>
    </recommendedName>
</protein>
<feature type="chain" id="PRO_0000171488" description="Small ribosomal subunit biogenesis GTPase RsgA 1">
    <location>
        <begin position="1"/>
        <end position="346"/>
    </location>
</feature>
<feature type="domain" description="CP-type G" evidence="2">
    <location>
        <begin position="93"/>
        <end position="248"/>
    </location>
</feature>
<feature type="binding site" evidence="1">
    <location>
        <begin position="138"/>
        <end position="141"/>
    </location>
    <ligand>
        <name>GTP</name>
        <dbReference type="ChEBI" id="CHEBI:37565"/>
    </ligand>
</feature>
<feature type="binding site" evidence="1">
    <location>
        <begin position="190"/>
        <end position="198"/>
    </location>
    <ligand>
        <name>GTP</name>
        <dbReference type="ChEBI" id="CHEBI:37565"/>
    </ligand>
</feature>
<feature type="binding site" evidence="1">
    <location>
        <position position="271"/>
    </location>
    <ligand>
        <name>Zn(2+)</name>
        <dbReference type="ChEBI" id="CHEBI:29105"/>
    </ligand>
</feature>
<feature type="binding site" evidence="1">
    <location>
        <position position="276"/>
    </location>
    <ligand>
        <name>Zn(2+)</name>
        <dbReference type="ChEBI" id="CHEBI:29105"/>
    </ligand>
</feature>
<feature type="binding site" evidence="1">
    <location>
        <position position="278"/>
    </location>
    <ligand>
        <name>Zn(2+)</name>
        <dbReference type="ChEBI" id="CHEBI:29105"/>
    </ligand>
</feature>
<feature type="binding site" evidence="1">
    <location>
        <position position="284"/>
    </location>
    <ligand>
        <name>Zn(2+)</name>
        <dbReference type="ChEBI" id="CHEBI:29105"/>
    </ligand>
</feature>
<keyword id="KW-0963">Cytoplasm</keyword>
<keyword id="KW-0342">GTP-binding</keyword>
<keyword id="KW-0378">Hydrolase</keyword>
<keyword id="KW-0479">Metal-binding</keyword>
<keyword id="KW-0547">Nucleotide-binding</keyword>
<keyword id="KW-0690">Ribosome biogenesis</keyword>
<keyword id="KW-0694">RNA-binding</keyword>
<keyword id="KW-0699">rRNA-binding</keyword>
<keyword id="KW-0862">Zinc</keyword>
<accession>Q92C22</accession>
<proteinExistence type="inferred from homology"/>
<organism>
    <name type="scientific">Listeria innocua serovar 6a (strain ATCC BAA-680 / CLIP 11262)</name>
    <dbReference type="NCBI Taxonomy" id="272626"/>
    <lineage>
        <taxon>Bacteria</taxon>
        <taxon>Bacillati</taxon>
        <taxon>Bacillota</taxon>
        <taxon>Bacilli</taxon>
        <taxon>Bacillales</taxon>
        <taxon>Listeriaceae</taxon>
        <taxon>Listeria</taxon>
    </lineage>
</organism>
<evidence type="ECO:0000255" key="1">
    <source>
        <dbReference type="HAMAP-Rule" id="MF_01820"/>
    </source>
</evidence>
<evidence type="ECO:0000255" key="2">
    <source>
        <dbReference type="PROSITE-ProRule" id="PRU01058"/>
    </source>
</evidence>
<gene>
    <name evidence="1" type="primary">rsgA1</name>
    <name type="ordered locus">lin1369</name>
</gene>
<reference key="1">
    <citation type="journal article" date="2001" name="Science">
        <title>Comparative genomics of Listeria species.</title>
        <authorList>
            <person name="Glaser P."/>
            <person name="Frangeul L."/>
            <person name="Buchrieser C."/>
            <person name="Rusniok C."/>
            <person name="Amend A."/>
            <person name="Baquero F."/>
            <person name="Berche P."/>
            <person name="Bloecker H."/>
            <person name="Brandt P."/>
            <person name="Chakraborty T."/>
            <person name="Charbit A."/>
            <person name="Chetouani F."/>
            <person name="Couve E."/>
            <person name="de Daruvar A."/>
            <person name="Dehoux P."/>
            <person name="Domann E."/>
            <person name="Dominguez-Bernal G."/>
            <person name="Duchaud E."/>
            <person name="Durant L."/>
            <person name="Dussurget O."/>
            <person name="Entian K.-D."/>
            <person name="Fsihi H."/>
            <person name="Garcia-del Portillo F."/>
            <person name="Garrido P."/>
            <person name="Gautier L."/>
            <person name="Goebel W."/>
            <person name="Gomez-Lopez N."/>
            <person name="Hain T."/>
            <person name="Hauf J."/>
            <person name="Jackson D."/>
            <person name="Jones L.-M."/>
            <person name="Kaerst U."/>
            <person name="Kreft J."/>
            <person name="Kuhn M."/>
            <person name="Kunst F."/>
            <person name="Kurapkat G."/>
            <person name="Madueno E."/>
            <person name="Maitournam A."/>
            <person name="Mata Vicente J."/>
            <person name="Ng E."/>
            <person name="Nedjari H."/>
            <person name="Nordsiek G."/>
            <person name="Novella S."/>
            <person name="de Pablos B."/>
            <person name="Perez-Diaz J.-C."/>
            <person name="Purcell R."/>
            <person name="Remmel B."/>
            <person name="Rose M."/>
            <person name="Schlueter T."/>
            <person name="Simoes N."/>
            <person name="Tierrez A."/>
            <person name="Vazquez-Boland J.-A."/>
            <person name="Voss H."/>
            <person name="Wehland J."/>
            <person name="Cossart P."/>
        </authorList>
    </citation>
    <scope>NUCLEOTIDE SEQUENCE [LARGE SCALE GENOMIC DNA]</scope>
    <source>
        <strain>ATCC BAA-680 / CLIP 11262</strain>
    </source>
</reference>
<name>RSGA1_LISIN</name>